<gene>
    <name evidence="1" type="primary">guaA</name>
    <name type="ordered locus">NGK_2643</name>
</gene>
<keyword id="KW-0002">3D-structure</keyword>
<keyword id="KW-0067">ATP-binding</keyword>
<keyword id="KW-0315">Glutamine amidotransferase</keyword>
<keyword id="KW-0332">GMP biosynthesis</keyword>
<keyword id="KW-0436">Ligase</keyword>
<keyword id="KW-0547">Nucleotide-binding</keyword>
<keyword id="KW-0658">Purine biosynthesis</keyword>
<comment type="function">
    <text evidence="1">Catalyzes the synthesis of GMP from XMP.</text>
</comment>
<comment type="catalytic activity">
    <reaction evidence="1">
        <text>XMP + L-glutamine + ATP + H2O = GMP + L-glutamate + AMP + diphosphate + 2 H(+)</text>
        <dbReference type="Rhea" id="RHEA:11680"/>
        <dbReference type="ChEBI" id="CHEBI:15377"/>
        <dbReference type="ChEBI" id="CHEBI:15378"/>
        <dbReference type="ChEBI" id="CHEBI:29985"/>
        <dbReference type="ChEBI" id="CHEBI:30616"/>
        <dbReference type="ChEBI" id="CHEBI:33019"/>
        <dbReference type="ChEBI" id="CHEBI:57464"/>
        <dbReference type="ChEBI" id="CHEBI:58115"/>
        <dbReference type="ChEBI" id="CHEBI:58359"/>
        <dbReference type="ChEBI" id="CHEBI:456215"/>
        <dbReference type="EC" id="6.3.5.2"/>
    </reaction>
</comment>
<comment type="pathway">
    <text evidence="1">Purine metabolism; GMP biosynthesis; GMP from XMP (L-Gln route): step 1/1.</text>
</comment>
<comment type="subunit">
    <text evidence="1">Homodimer.</text>
</comment>
<accession>B4RJH7</accession>
<dbReference type="EC" id="6.3.5.2" evidence="1"/>
<dbReference type="EMBL" id="CP001050">
    <property type="protein sequence ID" value="ACF31242.1"/>
    <property type="molecule type" value="Genomic_DNA"/>
</dbReference>
<dbReference type="RefSeq" id="WP_003702177.1">
    <property type="nucleotide sequence ID" value="NC_011035.1"/>
</dbReference>
<dbReference type="PDB" id="5TW7">
    <property type="method" value="X-ray"/>
    <property type="resolution" value="2.35 A"/>
    <property type="chains" value="A/B/C/D/E/F=1-521"/>
</dbReference>
<dbReference type="PDBsum" id="5TW7"/>
<dbReference type="SMR" id="B4RJH7"/>
<dbReference type="MEROPS" id="C26.957"/>
<dbReference type="KEGG" id="ngk:NGK_2643"/>
<dbReference type="HOGENOM" id="CLU_014340_0_5_4"/>
<dbReference type="UniPathway" id="UPA00189">
    <property type="reaction ID" value="UER00296"/>
</dbReference>
<dbReference type="Proteomes" id="UP000002564">
    <property type="component" value="Chromosome"/>
</dbReference>
<dbReference type="GO" id="GO:0005829">
    <property type="term" value="C:cytosol"/>
    <property type="evidence" value="ECO:0007669"/>
    <property type="project" value="TreeGrafter"/>
</dbReference>
<dbReference type="GO" id="GO:0005524">
    <property type="term" value="F:ATP binding"/>
    <property type="evidence" value="ECO:0007669"/>
    <property type="project" value="UniProtKB-UniRule"/>
</dbReference>
<dbReference type="GO" id="GO:0003921">
    <property type="term" value="F:GMP synthase activity"/>
    <property type="evidence" value="ECO:0007669"/>
    <property type="project" value="InterPro"/>
</dbReference>
<dbReference type="CDD" id="cd01742">
    <property type="entry name" value="GATase1_GMP_Synthase"/>
    <property type="match status" value="1"/>
</dbReference>
<dbReference type="CDD" id="cd01997">
    <property type="entry name" value="GMP_synthase_C"/>
    <property type="match status" value="1"/>
</dbReference>
<dbReference type="FunFam" id="3.30.300.10:FF:000002">
    <property type="entry name" value="GMP synthase [glutamine-hydrolyzing]"/>
    <property type="match status" value="1"/>
</dbReference>
<dbReference type="FunFam" id="3.40.50.620:FF:000001">
    <property type="entry name" value="GMP synthase [glutamine-hydrolyzing]"/>
    <property type="match status" value="1"/>
</dbReference>
<dbReference type="FunFam" id="3.40.50.880:FF:000001">
    <property type="entry name" value="GMP synthase [glutamine-hydrolyzing]"/>
    <property type="match status" value="1"/>
</dbReference>
<dbReference type="Gene3D" id="3.30.300.10">
    <property type="match status" value="1"/>
</dbReference>
<dbReference type="Gene3D" id="3.40.50.880">
    <property type="match status" value="1"/>
</dbReference>
<dbReference type="Gene3D" id="3.40.50.620">
    <property type="entry name" value="HUPs"/>
    <property type="match status" value="1"/>
</dbReference>
<dbReference type="HAMAP" id="MF_00344">
    <property type="entry name" value="GMP_synthase"/>
    <property type="match status" value="1"/>
</dbReference>
<dbReference type="InterPro" id="IPR029062">
    <property type="entry name" value="Class_I_gatase-like"/>
</dbReference>
<dbReference type="InterPro" id="IPR017926">
    <property type="entry name" value="GATASE"/>
</dbReference>
<dbReference type="InterPro" id="IPR001674">
    <property type="entry name" value="GMP_synth_C"/>
</dbReference>
<dbReference type="InterPro" id="IPR004739">
    <property type="entry name" value="GMP_synth_GATase"/>
</dbReference>
<dbReference type="InterPro" id="IPR022955">
    <property type="entry name" value="GMP_synthase"/>
</dbReference>
<dbReference type="InterPro" id="IPR025777">
    <property type="entry name" value="GMPS_ATP_PPase_dom"/>
</dbReference>
<dbReference type="InterPro" id="IPR022310">
    <property type="entry name" value="NAD/GMP_synthase"/>
</dbReference>
<dbReference type="InterPro" id="IPR014729">
    <property type="entry name" value="Rossmann-like_a/b/a_fold"/>
</dbReference>
<dbReference type="NCBIfam" id="TIGR00884">
    <property type="entry name" value="guaA_Cterm"/>
    <property type="match status" value="1"/>
</dbReference>
<dbReference type="NCBIfam" id="TIGR00888">
    <property type="entry name" value="guaA_Nterm"/>
    <property type="match status" value="1"/>
</dbReference>
<dbReference type="NCBIfam" id="NF000848">
    <property type="entry name" value="PRK00074.1"/>
    <property type="match status" value="1"/>
</dbReference>
<dbReference type="PANTHER" id="PTHR11922:SF2">
    <property type="entry name" value="GMP SYNTHASE [GLUTAMINE-HYDROLYZING]"/>
    <property type="match status" value="1"/>
</dbReference>
<dbReference type="PANTHER" id="PTHR11922">
    <property type="entry name" value="GMP SYNTHASE-RELATED"/>
    <property type="match status" value="1"/>
</dbReference>
<dbReference type="Pfam" id="PF00117">
    <property type="entry name" value="GATase"/>
    <property type="match status" value="1"/>
</dbReference>
<dbReference type="Pfam" id="PF00958">
    <property type="entry name" value="GMP_synt_C"/>
    <property type="match status" value="1"/>
</dbReference>
<dbReference type="Pfam" id="PF02540">
    <property type="entry name" value="NAD_synthase"/>
    <property type="match status" value="1"/>
</dbReference>
<dbReference type="PRINTS" id="PR00097">
    <property type="entry name" value="ANTSNTHASEII"/>
</dbReference>
<dbReference type="PRINTS" id="PR00096">
    <property type="entry name" value="GATASE"/>
</dbReference>
<dbReference type="SUPFAM" id="SSF52402">
    <property type="entry name" value="Adenine nucleotide alpha hydrolases-like"/>
    <property type="match status" value="1"/>
</dbReference>
<dbReference type="SUPFAM" id="SSF52317">
    <property type="entry name" value="Class I glutamine amidotransferase-like"/>
    <property type="match status" value="1"/>
</dbReference>
<dbReference type="SUPFAM" id="SSF54810">
    <property type="entry name" value="GMP synthetase C-terminal dimerisation domain"/>
    <property type="match status" value="1"/>
</dbReference>
<dbReference type="PROSITE" id="PS51273">
    <property type="entry name" value="GATASE_TYPE_1"/>
    <property type="match status" value="1"/>
</dbReference>
<dbReference type="PROSITE" id="PS51553">
    <property type="entry name" value="GMPS_ATP_PPASE"/>
    <property type="match status" value="1"/>
</dbReference>
<feature type="chain" id="PRO_1000120341" description="GMP synthase [glutamine-hydrolyzing]">
    <location>
        <begin position="1"/>
        <end position="521"/>
    </location>
</feature>
<feature type="domain" description="Glutamine amidotransferase type-1" evidence="1">
    <location>
        <begin position="5"/>
        <end position="197"/>
    </location>
</feature>
<feature type="domain" description="GMPS ATP-PPase" evidence="1">
    <location>
        <begin position="198"/>
        <end position="390"/>
    </location>
</feature>
<feature type="active site" description="Nucleophile" evidence="1">
    <location>
        <position position="81"/>
    </location>
</feature>
<feature type="active site" evidence="1">
    <location>
        <position position="171"/>
    </location>
</feature>
<feature type="active site" evidence="1">
    <location>
        <position position="173"/>
    </location>
</feature>
<feature type="binding site" evidence="1">
    <location>
        <begin position="225"/>
        <end position="231"/>
    </location>
    <ligand>
        <name>ATP</name>
        <dbReference type="ChEBI" id="CHEBI:30616"/>
    </ligand>
</feature>
<feature type="strand" evidence="2">
    <location>
        <begin position="5"/>
        <end position="10"/>
    </location>
</feature>
<feature type="helix" evidence="2">
    <location>
        <begin position="16"/>
        <end position="25"/>
    </location>
</feature>
<feature type="strand" evidence="2">
    <location>
        <begin position="29"/>
        <end position="34"/>
    </location>
</feature>
<feature type="helix" evidence="2">
    <location>
        <begin position="39"/>
        <end position="45"/>
    </location>
</feature>
<feature type="strand" evidence="2">
    <location>
        <begin position="48"/>
        <end position="52"/>
    </location>
</feature>
<feature type="helix" evidence="2">
    <location>
        <begin position="68"/>
        <end position="72"/>
    </location>
</feature>
<feature type="strand" evidence="2">
    <location>
        <begin position="73"/>
        <end position="75"/>
    </location>
</feature>
<feature type="strand" evidence="2">
    <location>
        <begin position="77"/>
        <end position="80"/>
    </location>
</feature>
<feature type="helix" evidence="2">
    <location>
        <begin position="82"/>
        <end position="90"/>
    </location>
</feature>
<feature type="strand" evidence="2">
    <location>
        <begin position="94"/>
        <end position="96"/>
    </location>
</feature>
<feature type="strand" evidence="2">
    <location>
        <begin position="103"/>
        <end position="110"/>
    </location>
</feature>
<feature type="turn" evidence="2">
    <location>
        <begin position="114"/>
        <end position="118"/>
    </location>
</feature>
<feature type="strand" evidence="2">
    <location>
        <begin position="121"/>
        <end position="123"/>
    </location>
</feature>
<feature type="strand" evidence="2">
    <location>
        <begin position="126"/>
        <end position="132"/>
    </location>
</feature>
<feature type="strand" evidence="2">
    <location>
        <begin position="134"/>
        <end position="139"/>
    </location>
</feature>
<feature type="strand" evidence="2">
    <location>
        <begin position="145"/>
        <end position="150"/>
    </location>
</feature>
<feature type="strand" evidence="2">
    <location>
        <begin position="153"/>
        <end position="160"/>
    </location>
</feature>
<feature type="turn" evidence="2">
    <location>
        <begin position="161"/>
        <end position="164"/>
    </location>
</feature>
<feature type="strand" evidence="2">
    <location>
        <begin position="165"/>
        <end position="170"/>
    </location>
</feature>
<feature type="helix" evidence="2">
    <location>
        <begin position="180"/>
        <end position="189"/>
    </location>
</feature>
<feature type="helix" evidence="2">
    <location>
        <begin position="200"/>
        <end position="215"/>
    </location>
</feature>
<feature type="strand" evidence="2">
    <location>
        <begin position="220"/>
        <end position="224"/>
    </location>
</feature>
<feature type="helix" evidence="2">
    <location>
        <begin position="228"/>
        <end position="241"/>
    </location>
</feature>
<feature type="helix" evidence="2">
    <location>
        <begin position="242"/>
        <end position="244"/>
    </location>
</feature>
<feature type="strand" evidence="2">
    <location>
        <begin position="245"/>
        <end position="251"/>
    </location>
</feature>
<feature type="helix" evidence="2">
    <location>
        <begin position="259"/>
        <end position="271"/>
    </location>
</feature>
<feature type="strand" evidence="2">
    <location>
        <begin position="274"/>
        <end position="279"/>
    </location>
</feature>
<feature type="helix" evidence="2">
    <location>
        <begin position="281"/>
        <end position="288"/>
    </location>
</feature>
<feature type="helix" evidence="2">
    <location>
        <begin position="294"/>
        <end position="315"/>
    </location>
</feature>
<feature type="strand" evidence="2">
    <location>
        <begin position="321"/>
        <end position="323"/>
    </location>
</feature>
<feature type="helix" evidence="2">
    <location>
        <begin position="328"/>
        <end position="331"/>
    </location>
</feature>
<feature type="strand" evidence="2">
    <location>
        <begin position="361"/>
        <end position="363"/>
    </location>
</feature>
<feature type="turn" evidence="2">
    <location>
        <begin position="365"/>
        <end position="368"/>
    </location>
</feature>
<feature type="helix" evidence="2">
    <location>
        <begin position="371"/>
        <end position="381"/>
    </location>
</feature>
<feature type="helix" evidence="2">
    <location>
        <begin position="385"/>
        <end position="388"/>
    </location>
</feature>
<feature type="helix" evidence="2">
    <location>
        <begin position="397"/>
        <end position="400"/>
    </location>
</feature>
<feature type="helix" evidence="2">
    <location>
        <begin position="408"/>
        <end position="427"/>
    </location>
</feature>
<feature type="helix" evidence="2">
    <location>
        <begin position="436"/>
        <end position="439"/>
    </location>
</feature>
<feature type="strand" evidence="2">
    <location>
        <begin position="441"/>
        <end position="454"/>
    </location>
</feature>
<feature type="strand" evidence="2">
    <location>
        <begin position="461"/>
        <end position="473"/>
    </location>
</feature>
<feature type="strand" evidence="2">
    <location>
        <begin position="479"/>
        <end position="481"/>
    </location>
</feature>
<feature type="helix" evidence="2">
    <location>
        <begin position="486"/>
        <end position="499"/>
    </location>
</feature>
<feature type="strand" evidence="2">
    <location>
        <begin position="503"/>
        <end position="509"/>
    </location>
</feature>
<sequence>MTQDKILILDFGSQVTRLIARRVREAHVYCELHSFDMPLDEIKAFNPKGIILSGGPNSVYESDYQADTGIFDLGIPVLGICYGMQFMAHHLGGEVQPGNQREFGYAQVKTIDSGLTRGIQDDAPNTLDVWMSHGDKVSKLPDGFAVIGDTPSCPIAMMENTEKQFYGIQFHPEVTHTKQGRALLNRFVLDICGAQPGWTMPNYIEEAVAKIREQVGSDEVILGLSGGVDSSVAAALIHRAIGDQLTCVFVDHGLLRLNEGKMVMDMFARNLGVKVIHVDAEGQFMAKLAGVTDPEKKRKIIGAEFIEVFDAEEKKLTNAKWLAQGTIYPDVIESAGAKTKKAHAIKSHHNVGGLPENMKLKLLEPLRDLFKDEVRELGVALGLPREMVYRHPFPGPGLGVRILGEVKKEYADLLRQADDIFIQELRNTTDENGTSWYDLTSQAFAVFLPVKSVGVMGDGRTYDYVVALRAVITSDFMTAHWAELPYSLLGRVSNRIINEVKGINRVVYDVSGKPPATIEWE</sequence>
<evidence type="ECO:0000255" key="1">
    <source>
        <dbReference type="HAMAP-Rule" id="MF_00344"/>
    </source>
</evidence>
<evidence type="ECO:0007829" key="2">
    <source>
        <dbReference type="PDB" id="5TW7"/>
    </source>
</evidence>
<reference key="1">
    <citation type="journal article" date="2008" name="J. Bacteriol.">
        <title>Complete genome sequence of Neisseria gonorrhoeae NCCP11945.</title>
        <authorList>
            <person name="Chung G.T."/>
            <person name="Yoo J.S."/>
            <person name="Oh H.B."/>
            <person name="Lee Y.S."/>
            <person name="Cha S.H."/>
            <person name="Kim S.J."/>
            <person name="Yoo C.K."/>
        </authorList>
    </citation>
    <scope>NUCLEOTIDE SEQUENCE [LARGE SCALE GENOMIC DNA]</scope>
    <source>
        <strain>NCCP11945</strain>
    </source>
</reference>
<protein>
    <recommendedName>
        <fullName evidence="1">GMP synthase [glutamine-hydrolyzing]</fullName>
        <ecNumber evidence="1">6.3.5.2</ecNumber>
    </recommendedName>
    <alternativeName>
        <fullName evidence="1">GMP synthetase</fullName>
    </alternativeName>
    <alternativeName>
        <fullName evidence="1">Glutamine amidotransferase</fullName>
    </alternativeName>
</protein>
<proteinExistence type="evidence at protein level"/>
<organism>
    <name type="scientific">Neisseria gonorrhoeae (strain NCCP11945)</name>
    <dbReference type="NCBI Taxonomy" id="521006"/>
    <lineage>
        <taxon>Bacteria</taxon>
        <taxon>Pseudomonadati</taxon>
        <taxon>Pseudomonadota</taxon>
        <taxon>Betaproteobacteria</taxon>
        <taxon>Neisseriales</taxon>
        <taxon>Neisseriaceae</taxon>
        <taxon>Neisseria</taxon>
    </lineage>
</organism>
<name>GUAA_NEIG2</name>